<comment type="function">
    <text evidence="1">Encapsidates the negative strand viral RNA, protecting it from nucleases. The encapsidated genomic RNA is termed the ribonucleoprotein (RNP) and serves as template for transcription and replication. The RNP needs to be localized in the host nucleus to start an infectious cycle, but is too large to diffuse through the nuclear pore complex. NP comprises at least 2 nuclear localization signals that are responsible for the active RNP import into the nucleus through cellular importin alpha/beta pathway. Later in the infection, nclear export of RNPs are mediated through viral proteins NEP interacting with M1 which binds nucleoproteins. It is possible that nucleoprotein binds directly host exportin-1/XPO1 and plays an active role in RNPs nuclear export. M1 interaction with RNP seems to hide nucleoprotein's nuclear localization signals. Soon after a virion infects a new cell, M1 dissociates from the RNP under acidification of the virion driven by M2 protein. Dissociation of M1 from RNP unmasks nucleoprotein's nuclear localization signals, targeting the RNP to the nucleus.</text>
</comment>
<comment type="subunit">
    <text evidence="1">Homomultimerizes to form the nucleocapsid. May bind host exportin-1/XPO1. Binds to viral genomic RNA. Protein-RNA contacts are mediated by a combination of electrostatic interactions between positively charged residues and the phosphate backbone and planar interactions between aromatic side chains and bases.</text>
</comment>
<comment type="subcellular location">
    <subcellularLocation>
        <location evidence="1">Virion</location>
    </subcellularLocation>
    <subcellularLocation>
        <location evidence="1">Host nucleus</location>
    </subcellularLocation>
</comment>
<comment type="PTM">
    <text evidence="1">Late in virus-infected cells, may be cleaved from a 56-kDa protein to a 53-kDa protein by a cellular caspase. This cleavage might be a marker for the onset of apoptosis in infected cells or have a specific function in virus host interaction.</text>
</comment>
<comment type="similarity">
    <text evidence="1">Belongs to the influenza viruses nucleoprotein family.</text>
</comment>
<dbReference type="EMBL" id="M63774">
    <property type="protein sequence ID" value="AAA52235.1"/>
    <property type="molecule type" value="Genomic_RNA"/>
</dbReference>
<dbReference type="EMBL" id="CY015105">
    <property type="protein sequence ID" value="ABI85140.1"/>
    <property type="molecule type" value="Genomic_RNA"/>
</dbReference>
<dbReference type="SMR" id="P26056"/>
<dbReference type="GO" id="GO:0019029">
    <property type="term" value="C:helical viral capsid"/>
    <property type="evidence" value="ECO:0007669"/>
    <property type="project" value="UniProtKB-UniRule"/>
</dbReference>
<dbReference type="GO" id="GO:0043657">
    <property type="term" value="C:host cell"/>
    <property type="evidence" value="ECO:0007669"/>
    <property type="project" value="GOC"/>
</dbReference>
<dbReference type="GO" id="GO:0042025">
    <property type="term" value="C:host cell nucleus"/>
    <property type="evidence" value="ECO:0007669"/>
    <property type="project" value="UniProtKB-SubCell"/>
</dbReference>
<dbReference type="GO" id="GO:1990904">
    <property type="term" value="C:ribonucleoprotein complex"/>
    <property type="evidence" value="ECO:0007669"/>
    <property type="project" value="UniProtKB-KW"/>
</dbReference>
<dbReference type="GO" id="GO:0019013">
    <property type="term" value="C:viral nucleocapsid"/>
    <property type="evidence" value="ECO:0007669"/>
    <property type="project" value="UniProtKB-UniRule"/>
</dbReference>
<dbReference type="GO" id="GO:0003723">
    <property type="term" value="F:RNA binding"/>
    <property type="evidence" value="ECO:0007669"/>
    <property type="project" value="UniProtKB-UniRule"/>
</dbReference>
<dbReference type="GO" id="GO:0005198">
    <property type="term" value="F:structural molecule activity"/>
    <property type="evidence" value="ECO:0007669"/>
    <property type="project" value="UniProtKB-UniRule"/>
</dbReference>
<dbReference type="GO" id="GO:0046718">
    <property type="term" value="P:symbiont entry into host cell"/>
    <property type="evidence" value="ECO:0007669"/>
    <property type="project" value="UniProtKB-KW"/>
</dbReference>
<dbReference type="GO" id="GO:0075732">
    <property type="term" value="P:viral penetration into host nucleus"/>
    <property type="evidence" value="ECO:0007669"/>
    <property type="project" value="UniProtKB-UniRule"/>
</dbReference>
<dbReference type="HAMAP" id="MF_04070">
    <property type="entry name" value="INFV_NCAP"/>
    <property type="match status" value="1"/>
</dbReference>
<dbReference type="InterPro" id="IPR002141">
    <property type="entry name" value="Flu_NP"/>
</dbReference>
<dbReference type="Pfam" id="PF00506">
    <property type="entry name" value="Flu_NP"/>
    <property type="match status" value="1"/>
</dbReference>
<dbReference type="SUPFAM" id="SSF161003">
    <property type="entry name" value="flu NP-like"/>
    <property type="match status" value="1"/>
</dbReference>
<evidence type="ECO:0000255" key="1">
    <source>
        <dbReference type="HAMAP-Rule" id="MF_04070"/>
    </source>
</evidence>
<evidence type="ECO:0000256" key="2">
    <source>
        <dbReference type="SAM" id="MobiDB-lite"/>
    </source>
</evidence>
<keyword id="KW-0167">Capsid protein</keyword>
<keyword id="KW-1139">Helical capsid protein</keyword>
<keyword id="KW-1048">Host nucleus</keyword>
<keyword id="KW-0945">Host-virus interaction</keyword>
<keyword id="KW-0687">Ribonucleoprotein</keyword>
<keyword id="KW-0694">RNA-binding</keyword>
<keyword id="KW-0543">Viral nucleoprotein</keyword>
<keyword id="KW-1163">Viral penetration into host nucleus</keyword>
<keyword id="KW-0946">Virion</keyword>
<keyword id="KW-1160">Virus entry into host cell</keyword>
<feature type="chain" id="PRO_0000079104" description="Nucleoprotein">
    <location>
        <begin position="1"/>
        <end position="498"/>
    </location>
</feature>
<feature type="region of interest" description="Disordered" evidence="2">
    <location>
        <begin position="1"/>
        <end position="21"/>
    </location>
</feature>
<feature type="short sequence motif" description="Unconventional nuclear localization signal" evidence="1">
    <location>
        <begin position="1"/>
        <end position="18"/>
    </location>
</feature>
<feature type="short sequence motif" description="Bipartite nuclear localization signal" evidence="1">
    <location>
        <begin position="198"/>
        <end position="216"/>
    </location>
</feature>
<feature type="sequence conflict" description="In Ref. 1; AAA52235." ref="1">
    <original>L</original>
    <variation>M</variation>
    <location>
        <position position="143"/>
    </location>
</feature>
<accession>P26056</accession>
<accession>Q0A2E2</accession>
<name>NCAP_I66A0</name>
<proteinExistence type="inferred from homology"/>
<organismHost>
    <name type="scientific">Aves</name>
    <dbReference type="NCBI Taxonomy" id="8782"/>
</organismHost>
<sequence length="498" mass="56242">MASQGTKRSYEQMETGGERQNATEIRASVGRMVGGIGRFYIQMCTELKLSDYEGRLIQNSITIERMVLSAFDERRNKYLEEHPSAGKDPKKTGGPIYRRRDGKWMRELILYDKEEIRRIWRQANNGENAAAGLTHLMIWHSNLNDATYQRTRALVRTGMDPRMCSLMQGSTLPRRSGAAGAAVKGVGTMVMELIRMIKRGINDRNFWRGENGRRTRIAYERMCNILKGKFQTAAQRAMMDQVRESRNPGNAEIEDLIFLARSALILRGSVAHKSCLPACVYGLAVASGYDFEREGYSLVGIDPFRLLQNSQVFSLIRSNENPAHKSQLVWMACHSAAFEDLRVSSFIRGTRVVPRGQLSTRGVQIASNENMETMDSSTLELRSRYWAIRTRSGGNTNQQRASAGQISVQPTFSVQRNLPFERATIMAAFTGNTEGRTSDMRTEIIKMMENARPEDVSFQGRGVFELSDEKATNPIVPSFDMSNEGSYFFGDNAEEYDN</sequence>
<protein>
    <recommendedName>
        <fullName evidence="1">Nucleoprotein</fullName>
    </recommendedName>
    <alternativeName>
        <fullName evidence="1">Nucleocapsid protein</fullName>
        <shortName evidence="1">Protein N</shortName>
    </alternativeName>
</protein>
<reference key="1">
    <citation type="journal article" date="1991" name="J. Virol.">
        <title>Evolution of influenza A virus nucleoprotein genes: implications for the origins of H1N1 human and classical swine viruses.</title>
        <authorList>
            <person name="Gorman O.T."/>
            <person name="Bean W.J."/>
            <person name="Kawaoka Y."/>
            <person name="Donatelli I."/>
            <person name="Guo Y."/>
            <person name="Webster R.G."/>
        </authorList>
    </citation>
    <scope>NUCLEOTIDE SEQUENCE [GENOMIC RNA]</scope>
</reference>
<reference key="2">
    <citation type="journal article" date="2006" name="Science">
        <title>Large-scale sequence analysis of avian influenza isolates.</title>
        <authorList>
            <person name="Obenauer J.C."/>
            <person name="Denson J."/>
            <person name="Mehta P.K."/>
            <person name="Su X."/>
            <person name="Mukatira S."/>
            <person name="Finkelstein D.B."/>
            <person name="Xu X."/>
            <person name="Wang J."/>
            <person name="Ma J."/>
            <person name="Fan Y."/>
            <person name="Rakestraw K.M."/>
            <person name="Webster R.G."/>
            <person name="Hoffmann E."/>
            <person name="Krauss S."/>
            <person name="Zheng J."/>
            <person name="Zhang Z."/>
            <person name="Naeve C.W."/>
        </authorList>
    </citation>
    <scope>NUCLEOTIDE SEQUENCE [GENOMIC RNA]</scope>
</reference>
<gene>
    <name evidence="1" type="primary">NP</name>
</gene>
<organism>
    <name type="scientific">Influenza A virus (strain A/Turkey/Ontario/7732/1966 H5N9)</name>
    <dbReference type="NCBI Taxonomy" id="380301"/>
    <lineage>
        <taxon>Viruses</taxon>
        <taxon>Riboviria</taxon>
        <taxon>Orthornavirae</taxon>
        <taxon>Negarnaviricota</taxon>
        <taxon>Polyploviricotina</taxon>
        <taxon>Insthoviricetes</taxon>
        <taxon>Articulavirales</taxon>
        <taxon>Orthomyxoviridae</taxon>
        <taxon>Alphainfluenzavirus</taxon>
        <taxon>Alphainfluenzavirus influenzae</taxon>
        <taxon>Influenza A virus</taxon>
    </lineage>
</organism>